<comment type="function">
    <text evidence="1">Loads pcna onto primed templates regulating velocity, spacing and restart activity of replication forks. May couple DNA replication to sister chromatid cohesion (By similarity).</text>
</comment>
<comment type="subunit">
    <text evidence="1">Component of the ctf18-RFC complex which consists of ctf18, ctf8, dscc1 and the RFC complex.</text>
</comment>
<comment type="subcellular location">
    <subcellularLocation>
        <location evidence="1">Nucleus</location>
    </subcellularLocation>
</comment>
<comment type="similarity">
    <text evidence="2">Belongs to the DCC1 family.</text>
</comment>
<evidence type="ECO:0000250" key="1"/>
<evidence type="ECO:0000305" key="2"/>
<reference key="1">
    <citation type="submission" date="2004-06" db="EMBL/GenBank/DDBJ databases">
        <authorList>
            <consortium name="NIH - Xenopus Gene Collection (XGC) project"/>
        </authorList>
    </citation>
    <scope>NUCLEOTIDE SEQUENCE [LARGE SCALE MRNA]</scope>
    <source>
        <tissue>Kidney</tissue>
    </source>
</reference>
<dbReference type="EMBL" id="BC074160">
    <property type="protein sequence ID" value="AAH74160.1"/>
    <property type="molecule type" value="mRNA"/>
</dbReference>
<dbReference type="RefSeq" id="NP_001086076.1">
    <property type="nucleotide sequence ID" value="NM_001092607.1"/>
</dbReference>
<dbReference type="SMR" id="Q6GMB0"/>
<dbReference type="IntAct" id="Q6GMB0">
    <property type="interactions" value="1"/>
</dbReference>
<dbReference type="DNASU" id="444505"/>
<dbReference type="GeneID" id="444505"/>
<dbReference type="KEGG" id="xla:444505"/>
<dbReference type="AGR" id="Xenbase:XB-GENE-5781778"/>
<dbReference type="CTD" id="444505"/>
<dbReference type="Xenbase" id="XB-GENE-5781778">
    <property type="gene designation" value="dscc1.L"/>
</dbReference>
<dbReference type="OMA" id="DSESWPF"/>
<dbReference type="OrthoDB" id="5199543at2759"/>
<dbReference type="Proteomes" id="UP000186698">
    <property type="component" value="Chromosome 6L"/>
</dbReference>
<dbReference type="Bgee" id="444505">
    <property type="expression patterns" value="Expressed in oocyte and 19 other cell types or tissues"/>
</dbReference>
<dbReference type="GO" id="GO:0000785">
    <property type="term" value="C:chromatin"/>
    <property type="evidence" value="ECO:0000250"/>
    <property type="project" value="UniProtKB"/>
</dbReference>
<dbReference type="GO" id="GO:0000775">
    <property type="term" value="C:chromosome, centromeric region"/>
    <property type="evidence" value="ECO:0000318"/>
    <property type="project" value="GO_Central"/>
</dbReference>
<dbReference type="GO" id="GO:0031390">
    <property type="term" value="C:Ctf18 RFC-like complex"/>
    <property type="evidence" value="ECO:0000318"/>
    <property type="project" value="GO_Central"/>
</dbReference>
<dbReference type="GO" id="GO:0003677">
    <property type="term" value="F:DNA binding"/>
    <property type="evidence" value="ECO:0007669"/>
    <property type="project" value="UniProtKB-KW"/>
</dbReference>
<dbReference type="GO" id="GO:0006260">
    <property type="term" value="P:DNA replication"/>
    <property type="evidence" value="ECO:0007669"/>
    <property type="project" value="UniProtKB-KW"/>
</dbReference>
<dbReference type="GO" id="GO:0034088">
    <property type="term" value="P:maintenance of mitotic sister chromatid cohesion"/>
    <property type="evidence" value="ECO:0000250"/>
    <property type="project" value="UniProtKB"/>
</dbReference>
<dbReference type="GO" id="GO:0006275">
    <property type="term" value="P:regulation of DNA replication"/>
    <property type="evidence" value="ECO:0000250"/>
    <property type="project" value="UniProtKB"/>
</dbReference>
<dbReference type="InterPro" id="IPR019128">
    <property type="entry name" value="Dcc1"/>
</dbReference>
<dbReference type="PANTHER" id="PTHR13395:SF6">
    <property type="entry name" value="SISTER CHROMATID COHESION PROTEIN DCC1"/>
    <property type="match status" value="1"/>
</dbReference>
<dbReference type="PANTHER" id="PTHR13395">
    <property type="entry name" value="SISTER CHROMATID COHESION PROTEIN DCC1-RELATED"/>
    <property type="match status" value="1"/>
</dbReference>
<dbReference type="Pfam" id="PF09724">
    <property type="entry name" value="Dcc1"/>
    <property type="match status" value="1"/>
</dbReference>
<proteinExistence type="evidence at transcript level"/>
<sequence>MSRSQEELEATLQIAKVNPEDLRSTVHCLSFSSEFTSGDYSLMELDDTLCKQIEAGDSLVIRGDKSDHAVLCSQDKTYDLKIADTSNLLLFIPGCKLPDQLPADQQPLSVIHCEIAGFSNHYWELRRCRPKLKKLKKLLMENTYNGPENESESSQETSLYTTEDLLSVIQSSTEELMDHLKAIHACNIKGIWRLLDFDYEMKLLNHITQLIDSESWSFSKVPLQVCLQELRSLEPEEMIEHCLTCYGKRLMEEGGDCFALDEDKICRATALMLLQNAVKFNLAEFQEVWQQSVPDGMNTRLDQLKGLALVDRTSRPETIFLLQTEDLPEDTQERFNTLFGMREKWTEADIAPYIQDLCGEKQTIGALLTKYARSSMQNGIKLFNSRRPLS</sequence>
<accession>Q6GMB0</accession>
<organism>
    <name type="scientific">Xenopus laevis</name>
    <name type="common">African clawed frog</name>
    <dbReference type="NCBI Taxonomy" id="8355"/>
    <lineage>
        <taxon>Eukaryota</taxon>
        <taxon>Metazoa</taxon>
        <taxon>Chordata</taxon>
        <taxon>Craniata</taxon>
        <taxon>Vertebrata</taxon>
        <taxon>Euteleostomi</taxon>
        <taxon>Amphibia</taxon>
        <taxon>Batrachia</taxon>
        <taxon>Anura</taxon>
        <taxon>Pipoidea</taxon>
        <taxon>Pipidae</taxon>
        <taxon>Xenopodinae</taxon>
        <taxon>Xenopus</taxon>
        <taxon>Xenopus</taxon>
    </lineage>
</organism>
<feature type="chain" id="PRO_0000318067" description="Sister chromatid cohesion protein DCC1">
    <location>
        <begin position="1"/>
        <end position="390"/>
    </location>
</feature>
<keyword id="KW-0131">Cell cycle</keyword>
<keyword id="KW-0235">DNA replication</keyword>
<keyword id="KW-0238">DNA-binding</keyword>
<keyword id="KW-0539">Nucleus</keyword>
<keyword id="KW-1185">Reference proteome</keyword>
<protein>
    <recommendedName>
        <fullName>Sister chromatid cohesion protein DCC1</fullName>
    </recommendedName>
</protein>
<gene>
    <name type="primary">dscc1</name>
    <name type="synonym">dcc1</name>
</gene>
<name>DCC1_XENLA</name>